<proteinExistence type="inferred from homology"/>
<accession>B1LQH5</accession>
<feature type="chain" id="PRO_1000132376" description="Fumarate reductase subunit C">
    <location>
        <begin position="1"/>
        <end position="131"/>
    </location>
</feature>
<feature type="transmembrane region" description="Helical" evidence="1">
    <location>
        <begin position="30"/>
        <end position="50"/>
    </location>
</feature>
<feature type="transmembrane region" description="Helical" evidence="1">
    <location>
        <begin position="63"/>
        <end position="83"/>
    </location>
</feature>
<feature type="transmembrane region" description="Helical" evidence="1">
    <location>
        <begin position="109"/>
        <end position="129"/>
    </location>
</feature>
<protein>
    <recommendedName>
        <fullName evidence="1">Fumarate reductase subunit C</fullName>
    </recommendedName>
    <alternativeName>
        <fullName evidence="1">Fumarate reductase 15 kDa hydrophobic protein</fullName>
    </alternativeName>
    <alternativeName>
        <fullName evidence="1">Quinol-fumarate reductase subunit C</fullName>
        <shortName evidence="1">QFR subunit C</shortName>
    </alternativeName>
</protein>
<name>FRDC_ECOSM</name>
<reference key="1">
    <citation type="journal article" date="2008" name="J. Bacteriol.">
        <title>Insights into the environmental resistance gene pool from the genome sequence of the multidrug-resistant environmental isolate Escherichia coli SMS-3-5.</title>
        <authorList>
            <person name="Fricke W.F."/>
            <person name="Wright M.S."/>
            <person name="Lindell A.H."/>
            <person name="Harkins D.M."/>
            <person name="Baker-Austin C."/>
            <person name="Ravel J."/>
            <person name="Stepanauskas R."/>
        </authorList>
    </citation>
    <scope>NUCLEOTIDE SEQUENCE [LARGE SCALE GENOMIC DNA]</scope>
    <source>
        <strain>SMS-3-5 / SECEC</strain>
    </source>
</reference>
<evidence type="ECO:0000255" key="1">
    <source>
        <dbReference type="HAMAP-Rule" id="MF_00708"/>
    </source>
</evidence>
<sequence>MTTKRKPYVRPMTSTWWKKLPFYRFYMLREGTAVPAVWFSIELIFGLFALKNGPEAWAGFVDFLQNPVIVIINLITLAAALLHTKTWFELAPKAANIIVKDEKMGPEPIIKSLWAVTVVATIVILFVALYW</sequence>
<gene>
    <name evidence="1" type="primary">frdC</name>
    <name type="ordered locus">EcSMS35_4623</name>
</gene>
<organism>
    <name type="scientific">Escherichia coli (strain SMS-3-5 / SECEC)</name>
    <dbReference type="NCBI Taxonomy" id="439855"/>
    <lineage>
        <taxon>Bacteria</taxon>
        <taxon>Pseudomonadati</taxon>
        <taxon>Pseudomonadota</taxon>
        <taxon>Gammaproteobacteria</taxon>
        <taxon>Enterobacterales</taxon>
        <taxon>Enterobacteriaceae</taxon>
        <taxon>Escherichia</taxon>
    </lineage>
</organism>
<dbReference type="EMBL" id="CP000970">
    <property type="protein sequence ID" value="ACB15757.1"/>
    <property type="molecule type" value="Genomic_DNA"/>
</dbReference>
<dbReference type="RefSeq" id="WP_000208757.1">
    <property type="nucleotide sequence ID" value="NC_010498.1"/>
</dbReference>
<dbReference type="SMR" id="B1LQH5"/>
<dbReference type="GeneID" id="93777670"/>
<dbReference type="KEGG" id="ecm:EcSMS35_4623"/>
<dbReference type="HOGENOM" id="CLU_156492_0_0_6"/>
<dbReference type="Proteomes" id="UP000007011">
    <property type="component" value="Chromosome"/>
</dbReference>
<dbReference type="GO" id="GO:0045283">
    <property type="term" value="C:fumarate reductase complex"/>
    <property type="evidence" value="ECO:0007669"/>
    <property type="project" value="UniProtKB-UniRule"/>
</dbReference>
<dbReference type="GO" id="GO:0005886">
    <property type="term" value="C:plasma membrane"/>
    <property type="evidence" value="ECO:0007669"/>
    <property type="project" value="UniProtKB-SubCell"/>
</dbReference>
<dbReference type="GO" id="GO:0000104">
    <property type="term" value="F:succinate dehydrogenase activity"/>
    <property type="evidence" value="ECO:0007669"/>
    <property type="project" value="UniProtKB-UniRule"/>
</dbReference>
<dbReference type="CDD" id="cd00546">
    <property type="entry name" value="QFR_TypeD_subunitC"/>
    <property type="match status" value="1"/>
</dbReference>
<dbReference type="FunFam" id="1.20.1300.10:FF:000003">
    <property type="entry name" value="Fumarate reductase subunit C"/>
    <property type="match status" value="1"/>
</dbReference>
<dbReference type="Gene3D" id="1.20.1300.10">
    <property type="entry name" value="Fumarate reductase/succinate dehydrogenase, transmembrane subunit"/>
    <property type="match status" value="1"/>
</dbReference>
<dbReference type="HAMAP" id="MF_00708">
    <property type="entry name" value="Fumarate_red_C"/>
    <property type="match status" value="1"/>
</dbReference>
<dbReference type="InterPro" id="IPR003510">
    <property type="entry name" value="Fumarate_red_C"/>
</dbReference>
<dbReference type="InterPro" id="IPR034804">
    <property type="entry name" value="SQR/QFR_C/D"/>
</dbReference>
<dbReference type="NCBIfam" id="NF003445">
    <property type="entry name" value="PRK04987.1"/>
    <property type="match status" value="1"/>
</dbReference>
<dbReference type="Pfam" id="PF02300">
    <property type="entry name" value="Fumarate_red_C"/>
    <property type="match status" value="1"/>
</dbReference>
<dbReference type="PIRSF" id="PIRSF000180">
    <property type="entry name" value="FrdC"/>
    <property type="match status" value="1"/>
</dbReference>
<dbReference type="SUPFAM" id="SSF81343">
    <property type="entry name" value="Fumarate reductase respiratory complex transmembrane subunits"/>
    <property type="match status" value="1"/>
</dbReference>
<comment type="function">
    <text evidence="1">Two distinct, membrane-bound, FAD-containing enzymes are responsible for the catalysis of fumarate and succinate interconversion; fumarate reductase is used in anaerobic growth, and succinate dehydrogenase is used in aerobic growth. Anchors the catalytic components of the fumarate reductase complex to the cell inner membrane, binds quinones.</text>
</comment>
<comment type="subunit">
    <text evidence="1">Part of an enzyme complex containing four subunits: a flavoprotein (FrdA), an iron-sulfur protein (FrdB), and two hydrophobic anchor proteins (FrdC and FrdD).</text>
</comment>
<comment type="subcellular location">
    <subcellularLocation>
        <location evidence="1">Cell inner membrane</location>
        <topology evidence="1">Multi-pass membrane protein</topology>
    </subcellularLocation>
</comment>
<comment type="similarity">
    <text evidence="1">Belongs to the FrdC family.</text>
</comment>
<keyword id="KW-0997">Cell inner membrane</keyword>
<keyword id="KW-1003">Cell membrane</keyword>
<keyword id="KW-0472">Membrane</keyword>
<keyword id="KW-0812">Transmembrane</keyword>
<keyword id="KW-1133">Transmembrane helix</keyword>